<sequence>MDGRCLHNIMYTGTYDEIMRAINIYEHRNYSSFRNLPLHYAIYSRRKDIVETLLKSGYDPNSVDITDNNCLQLLSMPFDITMLPVDEEVQDYAISFYLSKNMKHTSMLIPITKEALRGNRYPSEPYFSSMCRKFKDNELCIMDLLLRYGALPNSRKDGLLPLYHAAAAGNTEMVELLLSYGAKTNLHTRYEDSIFMCAIKSNNVKTAKIISDLYNYKNDINNILKTIQLYNADMLLFLIEIGLDINTKDKKGKTALHYACNSINCIETVKEIMKYGADINVKDREGLTPLHSACKYGDLKLSKLLIEYGADVKVKTTSTVLNLAVESGNVELVKFLIEKNPEFITSDYLSLSLAIRCKDINIVLLLLDAGMDVNSSKCISTPLHLGVILGNSNIVKLLLDHGANINAIDKYGETPLEAANKRINIDYAELYKSNRFIIKYLVFLSRYDYKIKNNIGFIKNMYIIDKDETLSCFRNMCETELDKISSIKIGQYSLYSLLASDNDVKEYICKNRQEITQKIIDNLKDIIIYRSFIEKYISRINI</sequence>
<organism>
    <name type="scientific">Fowlpox virus (strain NVSL)</name>
    <name type="common">FPV</name>
    <dbReference type="NCBI Taxonomy" id="928301"/>
    <lineage>
        <taxon>Viruses</taxon>
        <taxon>Varidnaviria</taxon>
        <taxon>Bamfordvirae</taxon>
        <taxon>Nucleocytoviricota</taxon>
        <taxon>Pokkesviricetes</taxon>
        <taxon>Chitovirales</taxon>
        <taxon>Poxviridae</taxon>
        <taxon>Chordopoxvirinae</taxon>
        <taxon>Avipoxvirus</taxon>
        <taxon>Fowlpox virus</taxon>
    </lineage>
</organism>
<keyword id="KW-0040">ANK repeat</keyword>
<keyword id="KW-1185">Reference proteome</keyword>
<keyword id="KW-0677">Repeat</keyword>
<organismHost>
    <name type="scientific">Vertebrata</name>
    <dbReference type="NCBI Taxonomy" id="7742"/>
</organismHost>
<feature type="chain" id="PRO_0000067111" description="Putative ankyrin repeat protein FPV115">
    <location>
        <begin position="1"/>
        <end position="542"/>
    </location>
</feature>
<feature type="repeat" description="ANK 1">
    <location>
        <begin position="33"/>
        <end position="62"/>
    </location>
</feature>
<feature type="repeat" description="ANK 2">
    <location>
        <begin position="157"/>
        <end position="186"/>
    </location>
</feature>
<feature type="repeat" description="ANK 3">
    <location>
        <begin position="218"/>
        <end position="247"/>
    </location>
</feature>
<feature type="repeat" description="ANK 4">
    <location>
        <begin position="251"/>
        <end position="281"/>
    </location>
</feature>
<feature type="repeat" description="ANK 5">
    <location>
        <begin position="285"/>
        <end position="314"/>
    </location>
</feature>
<feature type="repeat" description="ANK 6">
    <location>
        <begin position="316"/>
        <end position="345"/>
    </location>
</feature>
<feature type="repeat" description="ANK 7">
    <location>
        <begin position="347"/>
        <end position="375"/>
    </location>
</feature>
<feature type="repeat" description="ANK 8">
    <location>
        <begin position="378"/>
        <end position="407"/>
    </location>
</feature>
<proteinExistence type="predicted"/>
<gene>
    <name type="ordered locus">FPV115</name>
</gene>
<protein>
    <recommendedName>
        <fullName>Putative ankyrin repeat protein FPV115</fullName>
    </recommendedName>
</protein>
<accession>Q9J5A7</accession>
<reference key="1">
    <citation type="journal article" date="2000" name="J. Virol.">
        <title>The genome of fowlpox virus.</title>
        <authorList>
            <person name="Afonso C.L."/>
            <person name="Tulman E.R."/>
            <person name="Lu Z."/>
            <person name="Zsak L."/>
            <person name="Kutish G.F."/>
            <person name="Rock D.L."/>
        </authorList>
    </citation>
    <scope>NUCLEOTIDE SEQUENCE [LARGE SCALE GENOMIC DNA]</scope>
</reference>
<dbReference type="EMBL" id="AF198100">
    <property type="protein sequence ID" value="AAF44459.1"/>
    <property type="molecule type" value="Genomic_DNA"/>
</dbReference>
<dbReference type="RefSeq" id="NP_039078.1">
    <property type="nucleotide sequence ID" value="NC_002188.1"/>
</dbReference>
<dbReference type="SMR" id="Q9J5A7"/>
<dbReference type="GeneID" id="1486663"/>
<dbReference type="KEGG" id="vg:1486663"/>
<dbReference type="Proteomes" id="UP000008597">
    <property type="component" value="Segment"/>
</dbReference>
<dbReference type="Gene3D" id="1.25.40.20">
    <property type="entry name" value="Ankyrin repeat-containing domain"/>
    <property type="match status" value="4"/>
</dbReference>
<dbReference type="InterPro" id="IPR002110">
    <property type="entry name" value="Ankyrin_rpt"/>
</dbReference>
<dbReference type="InterPro" id="IPR036770">
    <property type="entry name" value="Ankyrin_rpt-contain_sf"/>
</dbReference>
<dbReference type="PANTHER" id="PTHR24198">
    <property type="entry name" value="ANKYRIN REPEAT AND PROTEIN KINASE DOMAIN-CONTAINING PROTEIN"/>
    <property type="match status" value="1"/>
</dbReference>
<dbReference type="PANTHER" id="PTHR24198:SF165">
    <property type="entry name" value="ANKYRIN REPEAT-CONTAINING PROTEIN-RELATED"/>
    <property type="match status" value="1"/>
</dbReference>
<dbReference type="Pfam" id="PF00023">
    <property type="entry name" value="Ank"/>
    <property type="match status" value="1"/>
</dbReference>
<dbReference type="Pfam" id="PF12796">
    <property type="entry name" value="Ank_2"/>
    <property type="match status" value="3"/>
</dbReference>
<dbReference type="PRINTS" id="PR01415">
    <property type="entry name" value="ANKYRIN"/>
</dbReference>
<dbReference type="SMART" id="SM00248">
    <property type="entry name" value="ANK"/>
    <property type="match status" value="8"/>
</dbReference>
<dbReference type="SUPFAM" id="SSF48403">
    <property type="entry name" value="Ankyrin repeat"/>
    <property type="match status" value="1"/>
</dbReference>
<dbReference type="PROSITE" id="PS50297">
    <property type="entry name" value="ANK_REP_REGION"/>
    <property type="match status" value="2"/>
</dbReference>
<dbReference type="PROSITE" id="PS50088">
    <property type="entry name" value="ANK_REPEAT"/>
    <property type="match status" value="6"/>
</dbReference>
<name>V155_FOWPN</name>